<organism>
    <name type="scientific">Gallus gallus</name>
    <name type="common">Chicken</name>
    <dbReference type="NCBI Taxonomy" id="9031"/>
    <lineage>
        <taxon>Eukaryota</taxon>
        <taxon>Metazoa</taxon>
        <taxon>Chordata</taxon>
        <taxon>Craniata</taxon>
        <taxon>Vertebrata</taxon>
        <taxon>Euteleostomi</taxon>
        <taxon>Archelosauria</taxon>
        <taxon>Archosauria</taxon>
        <taxon>Dinosauria</taxon>
        <taxon>Saurischia</taxon>
        <taxon>Theropoda</taxon>
        <taxon>Coelurosauria</taxon>
        <taxon>Aves</taxon>
        <taxon>Neognathae</taxon>
        <taxon>Galloanserae</taxon>
        <taxon>Galliformes</taxon>
        <taxon>Phasianidae</taxon>
        <taxon>Phasianinae</taxon>
        <taxon>Gallus</taxon>
    </lineage>
</organism>
<gene>
    <name type="primary">ZIC1</name>
    <name type="synonym">ZIC</name>
</gene>
<reference key="1">
    <citation type="journal article" date="2002" name="Dev. Biol.">
        <title>Zic1 promotes the expansion of dorsal neural progenitors in spinal cord by inhibiting neuronal differentiation.</title>
        <authorList>
            <person name="Aruga J."/>
            <person name="Tohmonda T."/>
            <person name="Homma S."/>
            <person name="Mikoshiba K."/>
        </authorList>
    </citation>
    <scope>NUCLEOTIDE SEQUENCE [MRNA]</scope>
    <scope>FUNCTION</scope>
    <scope>DEVELOPMENTAL STAGE</scope>
</reference>
<sequence length="444" mass="48165">MLLDAGPQYPAIGVTTFGSSRHHSAADVTDREVGLGINPFADGMGAFKLNPGGHELASAGQTAFTSQAPGYAAALGHHHHPPHVGSYSSAAFNSTRDFLFRNRGFGEAAAASAQHSLFASAAGGFGGPHGHGDAAGHILFPGLHEQAAGHASPNVVNGQMRLGFSGDMYGRAEQYGQVTSPRSEHYASSQLHGYGHMNMNMAAHHGAGAFFRYMRQPIKQELICKWIEPEQLANPKKSCNKTFSTMHELVTHVTVEHVGGPEQSNHICFWEECPREGKPFKAKYKLVNHIRVHTGEKPFPCPFPGCGKVFARSENLKIHKRTHTGEKPFKCEFEGCDRRFANSSDRKKHMHVHTSDKPYLCKMCDKSYTHPSSLRKHMKVHESSSQGSQPSPAASSGYESSTPPTIVSPSTENQTASSLSPSSSAGHHTASHSTLTSNFNEWYV</sequence>
<evidence type="ECO:0000250" key="1"/>
<evidence type="ECO:0000255" key="2">
    <source>
        <dbReference type="PROSITE-ProRule" id="PRU00042"/>
    </source>
</evidence>
<evidence type="ECO:0000256" key="3">
    <source>
        <dbReference type="SAM" id="MobiDB-lite"/>
    </source>
</evidence>
<evidence type="ECO:0000269" key="4">
    <source>
    </source>
</evidence>
<evidence type="ECO:0000305" key="5"/>
<comment type="function">
    <text evidence="1 4">Acts as a transcriptional activator. Involved in neurogenesis. Plays important roles in the early stage of organogenesis of the CNS, as well as during dorsal spinal cord development and maturation of the cerebellum. Binds to the minimal GLI-consensus sequence 5'-TGGGTGGTC-3' (By similarity).</text>
</comment>
<comment type="subcellular location">
    <subcellularLocation>
        <location evidence="1">Nucleus</location>
    </subcellularLocation>
    <subcellularLocation>
        <location evidence="1">Cytoplasm</location>
    </subcellularLocation>
</comment>
<comment type="developmental stage">
    <text evidence="4">Expressed in dorsal undifferentiated neural cells in the spinal cord at stages 8 and 23 (at protein level). Expressed in the dorsal neural tube along almost the entire rostrocaudal extent and dorsomedial somites at stage 8. Expressed in the dorsal hindbrain, spinal cord, midbrain and forebrain at stage 17. Expressed in somites and the dorsal CNS at stage 23.</text>
</comment>
<comment type="similarity">
    <text evidence="5">Belongs to the GLI C2H2-type zinc-finger protein family.</text>
</comment>
<proteinExistence type="evidence at protein level"/>
<dbReference type="EMBL" id="AB078610">
    <property type="protein sequence ID" value="BAB92091.1"/>
    <property type="molecule type" value="mRNA"/>
</dbReference>
<dbReference type="RefSeq" id="NP_989585.1">
    <property type="nucleotide sequence ID" value="NM_204254.1"/>
</dbReference>
<dbReference type="SMR" id="Q8JJC0"/>
<dbReference type="FunCoup" id="Q8JJC0">
    <property type="interactions" value="8"/>
</dbReference>
<dbReference type="STRING" id="9031.ENSGALP00000054372"/>
<dbReference type="PaxDb" id="9031-ENSGALP00000039679"/>
<dbReference type="GeneID" id="374103"/>
<dbReference type="KEGG" id="gga:374103"/>
<dbReference type="CTD" id="7545"/>
<dbReference type="VEuPathDB" id="HostDB:geneid_374103"/>
<dbReference type="eggNOG" id="KOG1721">
    <property type="taxonomic scope" value="Eukaryota"/>
</dbReference>
<dbReference type="InParanoid" id="Q8JJC0"/>
<dbReference type="OrthoDB" id="3214149at2759"/>
<dbReference type="PhylomeDB" id="Q8JJC0"/>
<dbReference type="PRO" id="PR:Q8JJC0"/>
<dbReference type="Proteomes" id="UP000000539">
    <property type="component" value="Unassembled WGS sequence"/>
</dbReference>
<dbReference type="GO" id="GO:0005737">
    <property type="term" value="C:cytoplasm"/>
    <property type="evidence" value="ECO:0007669"/>
    <property type="project" value="UniProtKB-SubCell"/>
</dbReference>
<dbReference type="GO" id="GO:0005654">
    <property type="term" value="C:nucleoplasm"/>
    <property type="evidence" value="ECO:0000304"/>
    <property type="project" value="Reactome"/>
</dbReference>
<dbReference type="GO" id="GO:0005634">
    <property type="term" value="C:nucleus"/>
    <property type="evidence" value="ECO:0000318"/>
    <property type="project" value="GO_Central"/>
</dbReference>
<dbReference type="GO" id="GO:0000981">
    <property type="term" value="F:DNA-binding transcription factor activity, RNA polymerase II-specific"/>
    <property type="evidence" value="ECO:0000318"/>
    <property type="project" value="GO_Central"/>
</dbReference>
<dbReference type="GO" id="GO:0000978">
    <property type="term" value="F:RNA polymerase II cis-regulatory region sequence-specific DNA binding"/>
    <property type="evidence" value="ECO:0000318"/>
    <property type="project" value="GO_Central"/>
</dbReference>
<dbReference type="GO" id="GO:0008270">
    <property type="term" value="F:zinc ion binding"/>
    <property type="evidence" value="ECO:0007669"/>
    <property type="project" value="UniProtKB-KW"/>
</dbReference>
<dbReference type="GO" id="GO:0030154">
    <property type="term" value="P:cell differentiation"/>
    <property type="evidence" value="ECO:0007669"/>
    <property type="project" value="UniProtKB-KW"/>
</dbReference>
<dbReference type="GO" id="GO:0007417">
    <property type="term" value="P:central nervous system development"/>
    <property type="evidence" value="ECO:0000318"/>
    <property type="project" value="GO_Central"/>
</dbReference>
<dbReference type="GO" id="GO:0042472">
    <property type="term" value="P:inner ear morphogenesis"/>
    <property type="evidence" value="ECO:0000270"/>
    <property type="project" value="UniProtKB"/>
</dbReference>
<dbReference type="GO" id="GO:0007389">
    <property type="term" value="P:pattern specification process"/>
    <property type="evidence" value="ECO:0000250"/>
    <property type="project" value="UniProtKB"/>
</dbReference>
<dbReference type="GO" id="GO:0008589">
    <property type="term" value="P:regulation of smoothened signaling pathway"/>
    <property type="evidence" value="ECO:0000250"/>
    <property type="project" value="UniProtKB"/>
</dbReference>
<dbReference type="GO" id="GO:0006357">
    <property type="term" value="P:regulation of transcription by RNA polymerase II"/>
    <property type="evidence" value="ECO:0000318"/>
    <property type="project" value="GO_Central"/>
</dbReference>
<dbReference type="GO" id="GO:0021510">
    <property type="term" value="P:spinal cord development"/>
    <property type="evidence" value="ECO:0000315"/>
    <property type="project" value="UniProtKB"/>
</dbReference>
<dbReference type="FunFam" id="3.30.160.60:FF:000035">
    <property type="entry name" value="Zinc finger protein ZIC 1"/>
    <property type="match status" value="1"/>
</dbReference>
<dbReference type="FunFam" id="3.30.160.60:FF:000039">
    <property type="entry name" value="Zinc finger protein ZIC 1"/>
    <property type="match status" value="1"/>
</dbReference>
<dbReference type="FunFam" id="3.30.160.60:FF:000041">
    <property type="entry name" value="Zinc finger protein ZIC 1"/>
    <property type="match status" value="1"/>
</dbReference>
<dbReference type="FunFam" id="3.30.160.60:FF:001330">
    <property type="entry name" value="Zinc finger protein ZIC 4"/>
    <property type="match status" value="1"/>
</dbReference>
<dbReference type="Gene3D" id="3.30.160.60">
    <property type="entry name" value="Classic Zinc Finger"/>
    <property type="match status" value="4"/>
</dbReference>
<dbReference type="InterPro" id="IPR043359">
    <property type="entry name" value="GLI-like"/>
</dbReference>
<dbReference type="InterPro" id="IPR056436">
    <property type="entry name" value="Znf-C2H2_ZIC1-5/GLI1-3-like"/>
</dbReference>
<dbReference type="InterPro" id="IPR036236">
    <property type="entry name" value="Znf_C2H2_sf"/>
</dbReference>
<dbReference type="InterPro" id="IPR013087">
    <property type="entry name" value="Znf_C2H2_type"/>
</dbReference>
<dbReference type="InterPro" id="IPR041643">
    <property type="entry name" value="Znf_ZIC"/>
</dbReference>
<dbReference type="PANTHER" id="PTHR45718:SF8">
    <property type="entry name" value="GLIS FAMILY ZINC FINGER 2"/>
    <property type="match status" value="1"/>
</dbReference>
<dbReference type="PANTHER" id="PTHR45718">
    <property type="entry name" value="TRANSCRIPTIONAL ACTIVATOR CUBITUS INTERRUPTUS"/>
    <property type="match status" value="1"/>
</dbReference>
<dbReference type="Pfam" id="PF00096">
    <property type="entry name" value="zf-C2H2"/>
    <property type="match status" value="3"/>
</dbReference>
<dbReference type="Pfam" id="PF23561">
    <property type="entry name" value="zf-C2H2_15"/>
    <property type="match status" value="1"/>
</dbReference>
<dbReference type="Pfam" id="PF18366">
    <property type="entry name" value="zf_ZIC"/>
    <property type="match status" value="1"/>
</dbReference>
<dbReference type="SMART" id="SM00355">
    <property type="entry name" value="ZnF_C2H2"/>
    <property type="match status" value="5"/>
</dbReference>
<dbReference type="SUPFAM" id="SSF57667">
    <property type="entry name" value="beta-beta-alpha zinc fingers"/>
    <property type="match status" value="2"/>
</dbReference>
<dbReference type="PROSITE" id="PS00028">
    <property type="entry name" value="ZINC_FINGER_C2H2_1"/>
    <property type="match status" value="3"/>
</dbReference>
<dbReference type="PROSITE" id="PS50157">
    <property type="entry name" value="ZINC_FINGER_C2H2_2"/>
    <property type="match status" value="4"/>
</dbReference>
<protein>
    <recommendedName>
        <fullName>Zinc finger protein ZIC 1</fullName>
    </recommendedName>
    <alternativeName>
        <fullName>Zinc finger protein of the cerebellum 1</fullName>
    </alternativeName>
</protein>
<accession>Q8JJC0</accession>
<feature type="chain" id="PRO_0000406214" description="Zinc finger protein ZIC 1">
    <location>
        <begin position="1"/>
        <end position="444"/>
    </location>
</feature>
<feature type="zinc finger region" description="C2H2-type 1" evidence="2">
    <location>
        <begin position="222"/>
        <end position="257"/>
    </location>
</feature>
<feature type="zinc finger region" description="C2H2-type 2; degenerate" evidence="2">
    <location>
        <begin position="271"/>
        <end position="293"/>
    </location>
</feature>
<feature type="zinc finger region" description="C2H2-type 3" evidence="2">
    <location>
        <begin position="299"/>
        <end position="323"/>
    </location>
</feature>
<feature type="zinc finger region" description="C2H2-type 4" evidence="2">
    <location>
        <begin position="329"/>
        <end position="353"/>
    </location>
</feature>
<feature type="zinc finger region" description="C2H2-type 5" evidence="2">
    <location>
        <begin position="359"/>
        <end position="381"/>
    </location>
</feature>
<feature type="region of interest" description="Disordered" evidence="3">
    <location>
        <begin position="372"/>
        <end position="432"/>
    </location>
</feature>
<feature type="compositionally biased region" description="Low complexity" evidence="3">
    <location>
        <begin position="383"/>
        <end position="432"/>
    </location>
</feature>
<keyword id="KW-0010">Activator</keyword>
<keyword id="KW-0963">Cytoplasm</keyword>
<keyword id="KW-0217">Developmental protein</keyword>
<keyword id="KW-0221">Differentiation</keyword>
<keyword id="KW-0238">DNA-binding</keyword>
<keyword id="KW-0479">Metal-binding</keyword>
<keyword id="KW-0524">Neurogenesis</keyword>
<keyword id="KW-0539">Nucleus</keyword>
<keyword id="KW-1185">Reference proteome</keyword>
<keyword id="KW-0677">Repeat</keyword>
<keyword id="KW-0804">Transcription</keyword>
<keyword id="KW-0805">Transcription regulation</keyword>
<keyword id="KW-0862">Zinc</keyword>
<keyword id="KW-0863">Zinc-finger</keyword>
<name>ZIC1_CHICK</name>